<feature type="chain" id="PRO_0000198870" description="Rho-related GTP-binding protein RhoJ">
    <location>
        <begin position="1"/>
        <end position="211"/>
    </location>
</feature>
<feature type="propeptide" id="PRO_0000281221" description="Removed in mature form" evidence="8">
    <location>
        <begin position="212"/>
        <end position="214"/>
    </location>
</feature>
<feature type="short sequence motif" description="Effector region" evidence="4">
    <location>
        <begin position="50"/>
        <end position="58"/>
    </location>
</feature>
<feature type="binding site" evidence="2">
    <location>
        <begin position="31"/>
        <end position="36"/>
    </location>
    <ligand>
        <name>GTP</name>
        <dbReference type="ChEBI" id="CHEBI:37565"/>
    </ligand>
</feature>
<feature type="binding site" evidence="2">
    <location>
        <begin position="46"/>
        <end position="53"/>
    </location>
    <ligand>
        <name>GTP</name>
        <dbReference type="ChEBI" id="CHEBI:37565"/>
    </ligand>
</feature>
<feature type="binding site" evidence="2">
    <location>
        <begin position="75"/>
        <end position="79"/>
    </location>
    <ligand>
        <name>GTP</name>
        <dbReference type="ChEBI" id="CHEBI:37565"/>
    </ligand>
</feature>
<feature type="binding site" evidence="2">
    <location>
        <begin position="133"/>
        <end position="136"/>
    </location>
    <ligand>
        <name>GTP</name>
        <dbReference type="ChEBI" id="CHEBI:37565"/>
    </ligand>
</feature>
<feature type="binding site" evidence="2">
    <location>
        <begin position="177"/>
        <end position="178"/>
    </location>
    <ligand>
        <name>GTP</name>
        <dbReference type="ChEBI" id="CHEBI:37565"/>
    </ligand>
</feature>
<feature type="modified residue" description="Cysteine methyl ester" evidence="1">
    <location>
        <position position="211"/>
    </location>
</feature>
<feature type="lipid moiety-binding region" description="S-palmitoyl cysteine" evidence="3">
    <location>
        <position position="3"/>
    </location>
</feature>
<feature type="lipid moiety-binding region" description="S-palmitoyl cysteine" evidence="3">
    <location>
        <position position="11"/>
    </location>
</feature>
<feature type="lipid moiety-binding region" description="S-farnesyl cysteine" evidence="1">
    <location>
        <position position="211"/>
    </location>
</feature>
<feature type="splice variant" id="VSP_005709" description="In isoform 2." evidence="6">
    <location>
        <begin position="4"/>
        <end position="13"/>
    </location>
</feature>
<feature type="sequence conflict" description="In Ref. 3; AAL09441." evidence="8" ref="3">
    <original>A</original>
    <variation>R</variation>
    <location>
        <position position="166"/>
    </location>
</feature>
<organism>
    <name type="scientific">Mus musculus</name>
    <name type="common">Mouse</name>
    <dbReference type="NCBI Taxonomy" id="10090"/>
    <lineage>
        <taxon>Eukaryota</taxon>
        <taxon>Metazoa</taxon>
        <taxon>Chordata</taxon>
        <taxon>Craniata</taxon>
        <taxon>Vertebrata</taxon>
        <taxon>Euteleostomi</taxon>
        <taxon>Mammalia</taxon>
        <taxon>Eutheria</taxon>
        <taxon>Euarchontoglires</taxon>
        <taxon>Glires</taxon>
        <taxon>Rodentia</taxon>
        <taxon>Myomorpha</taxon>
        <taxon>Muroidea</taxon>
        <taxon>Muridae</taxon>
        <taxon>Murinae</taxon>
        <taxon>Mus</taxon>
        <taxon>Mus</taxon>
    </lineage>
</organism>
<comment type="function">
    <text evidence="3 5">Plasma membrane-associated small GTPase specifically involved in angiogenesis (By similarity). Required for endothelial cell migration during vascular development via its interaction with GLUL (By similarity). Elicits the formation of F-actin-rich structures, thereby regulating endothelial cell migration (PubMed:10967094).</text>
</comment>
<comment type="subunit">
    <text evidence="3 5">Interacts with the CRIB domains of proteins such as Pak1 and Was/Wasp (PubMed:10967094). Interacts with GLUL (By similarity).</text>
</comment>
<comment type="subcellular location">
    <subcellularLocation>
        <location evidence="3">Cell membrane</location>
        <topology evidence="3">Lipid-anchor</topology>
        <orientation evidence="3">Cytoplasmic side</orientation>
    </subcellularLocation>
    <text evidence="3">Localization to the plasma membrane is regulated by GLUL.</text>
</comment>
<comment type="alternative products">
    <event type="alternative splicing"/>
    <isoform>
        <id>Q9ER71-1</id>
        <name>1</name>
        <sequence type="displayed"/>
    </isoform>
    <isoform>
        <id>Q9ER71-2</id>
        <name>2</name>
        <sequence type="described" ref="VSP_005709"/>
    </isoform>
</comment>
<comment type="tissue specificity">
    <text evidence="5">Highly expressed in heart with moderate levels in lung and liver (PubMed:10967094). Very low levels detected in brain, spleen, skeletal muscle, kidney and testis (PubMed:10967094).</text>
</comment>
<comment type="PTM">
    <text evidence="3">Palmitoylated; regulates localization to the plasma membrane and may be mediated by GLUL.</text>
</comment>
<comment type="similarity">
    <text evidence="8">Belongs to the small GTPase superfamily. Rho family.</text>
</comment>
<proteinExistence type="evidence at protein level"/>
<gene>
    <name type="primary">Rhoj</name>
    <name type="synonym">Arhj</name>
    <name evidence="7" type="synonym">Rhoi</name>
    <name type="synonym">Rhot</name>
    <name type="synonym">Tc10l</name>
    <name evidence="6" type="synonym">Tcl</name>
</gene>
<reference key="1">
    <citation type="journal article" date="2000" name="J. Biol. Chem.">
        <title>Characterization of TCL, a new GTPase of the Rho family related to TC10 and Cdc42.</title>
        <authorList>
            <person name="Vignal E."/>
            <person name="De Toledo M."/>
            <person name="Comunale F."/>
            <person name="Ladopoulou A."/>
            <person name="Gauthier-Rouviere C."/>
            <person name="Blangy A."/>
            <person name="Fort P."/>
        </authorList>
    </citation>
    <scope>NUCLEOTIDE SEQUENCE [MRNA] (ISOFORM 2)</scope>
    <scope>FUNCTION</scope>
    <scope>SUBUNIT</scope>
    <scope>TISSUE SPECIFICITY</scope>
</reference>
<reference key="2">
    <citation type="journal article" date="2003" name="J. Cell Sci.">
        <title>Small GTPase Tc10 and its homologue RhoT induce N-WASP-mediated long process formation and neurite outgrowth.</title>
        <authorList>
            <person name="Abe T."/>
            <person name="Kato M."/>
            <person name="Miki H."/>
            <person name="Takenawa T."/>
            <person name="Endo T."/>
        </authorList>
    </citation>
    <scope>NUCLEOTIDE SEQUENCE [MRNA] (ISOFORM 1)</scope>
</reference>
<reference key="3">
    <citation type="submission" date="2000-09" db="EMBL/GenBank/DDBJ databases">
        <title>A novel Rho GTPase (RhoI) induces loss of stress-fibers and results in apical actin reorganization.</title>
        <authorList>
            <person name="Allen M."/>
            <person name="Halford S."/>
            <person name="Daniels H."/>
            <person name="McIntosh B."/>
            <person name="Kanuga N."/>
            <person name="Greenwood J."/>
            <person name="Carey A.H."/>
            <person name="Adamson P."/>
        </authorList>
    </citation>
    <scope>NUCLEOTIDE SEQUENCE [MRNA] (ISOFORM 1)</scope>
    <source>
        <strain>C57BL/6J</strain>
    </source>
</reference>
<reference key="4">
    <citation type="journal article" date="2005" name="Science">
        <title>The transcriptional landscape of the mammalian genome.</title>
        <authorList>
            <person name="Carninci P."/>
            <person name="Kasukawa T."/>
            <person name="Katayama S."/>
            <person name="Gough J."/>
            <person name="Frith M.C."/>
            <person name="Maeda N."/>
            <person name="Oyama R."/>
            <person name="Ravasi T."/>
            <person name="Lenhard B."/>
            <person name="Wells C."/>
            <person name="Kodzius R."/>
            <person name="Shimokawa K."/>
            <person name="Bajic V.B."/>
            <person name="Brenner S.E."/>
            <person name="Batalov S."/>
            <person name="Forrest A.R."/>
            <person name="Zavolan M."/>
            <person name="Davis M.J."/>
            <person name="Wilming L.G."/>
            <person name="Aidinis V."/>
            <person name="Allen J.E."/>
            <person name="Ambesi-Impiombato A."/>
            <person name="Apweiler R."/>
            <person name="Aturaliya R.N."/>
            <person name="Bailey T.L."/>
            <person name="Bansal M."/>
            <person name="Baxter L."/>
            <person name="Beisel K.W."/>
            <person name="Bersano T."/>
            <person name="Bono H."/>
            <person name="Chalk A.M."/>
            <person name="Chiu K.P."/>
            <person name="Choudhary V."/>
            <person name="Christoffels A."/>
            <person name="Clutterbuck D.R."/>
            <person name="Crowe M.L."/>
            <person name="Dalla E."/>
            <person name="Dalrymple B.P."/>
            <person name="de Bono B."/>
            <person name="Della Gatta G."/>
            <person name="di Bernardo D."/>
            <person name="Down T."/>
            <person name="Engstrom P."/>
            <person name="Fagiolini M."/>
            <person name="Faulkner G."/>
            <person name="Fletcher C.F."/>
            <person name="Fukushima T."/>
            <person name="Furuno M."/>
            <person name="Futaki S."/>
            <person name="Gariboldi M."/>
            <person name="Georgii-Hemming P."/>
            <person name="Gingeras T.R."/>
            <person name="Gojobori T."/>
            <person name="Green R.E."/>
            <person name="Gustincich S."/>
            <person name="Harbers M."/>
            <person name="Hayashi Y."/>
            <person name="Hensch T.K."/>
            <person name="Hirokawa N."/>
            <person name="Hill D."/>
            <person name="Huminiecki L."/>
            <person name="Iacono M."/>
            <person name="Ikeo K."/>
            <person name="Iwama A."/>
            <person name="Ishikawa T."/>
            <person name="Jakt M."/>
            <person name="Kanapin A."/>
            <person name="Katoh M."/>
            <person name="Kawasawa Y."/>
            <person name="Kelso J."/>
            <person name="Kitamura H."/>
            <person name="Kitano H."/>
            <person name="Kollias G."/>
            <person name="Krishnan S.P."/>
            <person name="Kruger A."/>
            <person name="Kummerfeld S.K."/>
            <person name="Kurochkin I.V."/>
            <person name="Lareau L.F."/>
            <person name="Lazarevic D."/>
            <person name="Lipovich L."/>
            <person name="Liu J."/>
            <person name="Liuni S."/>
            <person name="McWilliam S."/>
            <person name="Madan Babu M."/>
            <person name="Madera M."/>
            <person name="Marchionni L."/>
            <person name="Matsuda H."/>
            <person name="Matsuzawa S."/>
            <person name="Miki H."/>
            <person name="Mignone F."/>
            <person name="Miyake S."/>
            <person name="Morris K."/>
            <person name="Mottagui-Tabar S."/>
            <person name="Mulder N."/>
            <person name="Nakano N."/>
            <person name="Nakauchi H."/>
            <person name="Ng P."/>
            <person name="Nilsson R."/>
            <person name="Nishiguchi S."/>
            <person name="Nishikawa S."/>
            <person name="Nori F."/>
            <person name="Ohara O."/>
            <person name="Okazaki Y."/>
            <person name="Orlando V."/>
            <person name="Pang K.C."/>
            <person name="Pavan W.J."/>
            <person name="Pavesi G."/>
            <person name="Pesole G."/>
            <person name="Petrovsky N."/>
            <person name="Piazza S."/>
            <person name="Reed J."/>
            <person name="Reid J.F."/>
            <person name="Ring B.Z."/>
            <person name="Ringwald M."/>
            <person name="Rost B."/>
            <person name="Ruan Y."/>
            <person name="Salzberg S.L."/>
            <person name="Sandelin A."/>
            <person name="Schneider C."/>
            <person name="Schoenbach C."/>
            <person name="Sekiguchi K."/>
            <person name="Semple C.A."/>
            <person name="Seno S."/>
            <person name="Sessa L."/>
            <person name="Sheng Y."/>
            <person name="Shibata Y."/>
            <person name="Shimada H."/>
            <person name="Shimada K."/>
            <person name="Silva D."/>
            <person name="Sinclair B."/>
            <person name="Sperling S."/>
            <person name="Stupka E."/>
            <person name="Sugiura K."/>
            <person name="Sultana R."/>
            <person name="Takenaka Y."/>
            <person name="Taki K."/>
            <person name="Tammoja K."/>
            <person name="Tan S.L."/>
            <person name="Tang S."/>
            <person name="Taylor M.S."/>
            <person name="Tegner J."/>
            <person name="Teichmann S.A."/>
            <person name="Ueda H.R."/>
            <person name="van Nimwegen E."/>
            <person name="Verardo R."/>
            <person name="Wei C.L."/>
            <person name="Yagi K."/>
            <person name="Yamanishi H."/>
            <person name="Zabarovsky E."/>
            <person name="Zhu S."/>
            <person name="Zimmer A."/>
            <person name="Hide W."/>
            <person name="Bult C."/>
            <person name="Grimmond S.M."/>
            <person name="Teasdale R.D."/>
            <person name="Liu E.T."/>
            <person name="Brusic V."/>
            <person name="Quackenbush J."/>
            <person name="Wahlestedt C."/>
            <person name="Mattick J.S."/>
            <person name="Hume D.A."/>
            <person name="Kai C."/>
            <person name="Sasaki D."/>
            <person name="Tomaru Y."/>
            <person name="Fukuda S."/>
            <person name="Kanamori-Katayama M."/>
            <person name="Suzuki M."/>
            <person name="Aoki J."/>
            <person name="Arakawa T."/>
            <person name="Iida J."/>
            <person name="Imamura K."/>
            <person name="Itoh M."/>
            <person name="Kato T."/>
            <person name="Kawaji H."/>
            <person name="Kawagashira N."/>
            <person name="Kawashima T."/>
            <person name="Kojima M."/>
            <person name="Kondo S."/>
            <person name="Konno H."/>
            <person name="Nakano K."/>
            <person name="Ninomiya N."/>
            <person name="Nishio T."/>
            <person name="Okada M."/>
            <person name="Plessy C."/>
            <person name="Shibata K."/>
            <person name="Shiraki T."/>
            <person name="Suzuki S."/>
            <person name="Tagami M."/>
            <person name="Waki K."/>
            <person name="Watahiki A."/>
            <person name="Okamura-Oho Y."/>
            <person name="Suzuki H."/>
            <person name="Kawai J."/>
            <person name="Hayashizaki Y."/>
        </authorList>
    </citation>
    <scope>NUCLEOTIDE SEQUENCE [LARGE SCALE MRNA] (ISOFORM 1)</scope>
    <source>
        <strain>C57BL/6J</strain>
        <strain>NOD</strain>
        <tissue>Embryo</tissue>
        <tissue>Spleen</tissue>
    </source>
</reference>
<reference key="5">
    <citation type="journal article" date="2004" name="Genome Res.">
        <title>The status, quality, and expansion of the NIH full-length cDNA project: the Mammalian Gene Collection (MGC).</title>
        <authorList>
            <consortium name="The MGC Project Team"/>
        </authorList>
    </citation>
    <scope>NUCLEOTIDE SEQUENCE [LARGE SCALE MRNA] (ISOFORM 1)</scope>
    <source>
        <strain>FVB/N-3</strain>
        <tissue>Mammary gland</tissue>
    </source>
</reference>
<sequence length="214" mass="23766">MSCRERTDSSCGCNGHEENRILKCVVVGDGAVGKTCLLMSYANDAFPEEYVPTVFDHYAVTVTVGGKQHLLGLYDTAGQEDYNQLRPLSYPNTDVFLICFSVVNPASYHNVQEEWVPELKDCMPHVPYVLIGTQIDLRDDPKTLARLLYMKEKPLTYEHGVKLAKAIGAQCYLECSALTQKGLKAVFDEAILTIFHPKKKKKGCLGCHGCCAII</sequence>
<protein>
    <recommendedName>
        <fullName>Rho-related GTP-binding protein RhoJ</fullName>
    </recommendedName>
    <alternativeName>
        <fullName evidence="6">Tc10-like GTP-binding protein</fullName>
    </alternativeName>
</protein>
<name>RHOJ_MOUSE</name>
<evidence type="ECO:0000250" key="1">
    <source>
        <dbReference type="UniProtKB" id="P62745"/>
    </source>
</evidence>
<evidence type="ECO:0000250" key="2">
    <source>
        <dbReference type="UniProtKB" id="Q92730"/>
    </source>
</evidence>
<evidence type="ECO:0000250" key="3">
    <source>
        <dbReference type="UniProtKB" id="Q9H4E5"/>
    </source>
</evidence>
<evidence type="ECO:0000255" key="4"/>
<evidence type="ECO:0000269" key="5">
    <source>
    </source>
</evidence>
<evidence type="ECO:0000303" key="6">
    <source>
    </source>
</evidence>
<evidence type="ECO:0000303" key="7">
    <source ref="3"/>
</evidence>
<evidence type="ECO:0000305" key="8"/>
<accession>Q9ER71</accession>
<accession>Q3TX76</accession>
<accession>Q920E4</accession>
<accession>Q9CQA7</accession>
<dbReference type="EMBL" id="AJ276568">
    <property type="protein sequence ID" value="CAC06700.1"/>
    <property type="molecule type" value="mRNA"/>
</dbReference>
<dbReference type="EMBL" id="AB060651">
    <property type="protein sequence ID" value="BAB91069.1"/>
    <property type="molecule type" value="mRNA"/>
</dbReference>
<dbReference type="EMBL" id="AF309564">
    <property type="protein sequence ID" value="AAL09441.1"/>
    <property type="molecule type" value="mRNA"/>
</dbReference>
<dbReference type="EMBL" id="AK003482">
    <property type="protein sequence ID" value="BAB22812.1"/>
    <property type="molecule type" value="mRNA"/>
</dbReference>
<dbReference type="EMBL" id="AK003490">
    <property type="protein sequence ID" value="BAB22818.1"/>
    <property type="molecule type" value="mRNA"/>
</dbReference>
<dbReference type="EMBL" id="AK156619">
    <property type="protein sequence ID" value="BAE33778.1"/>
    <property type="molecule type" value="mRNA"/>
</dbReference>
<dbReference type="EMBL" id="AK159385">
    <property type="protein sequence ID" value="BAE35040.1"/>
    <property type="molecule type" value="mRNA"/>
</dbReference>
<dbReference type="EMBL" id="BC043719">
    <property type="protein sequence ID" value="AAH43719.1"/>
    <property type="molecule type" value="mRNA"/>
</dbReference>
<dbReference type="CCDS" id="CCDS25981.1">
    <molecule id="Q9ER71-1"/>
</dbReference>
<dbReference type="RefSeq" id="NP_075764.1">
    <molecule id="Q9ER71-1"/>
    <property type="nucleotide sequence ID" value="NM_023275.2"/>
</dbReference>
<dbReference type="SMR" id="Q9ER71"/>
<dbReference type="BioGRID" id="219817">
    <property type="interactions" value="8"/>
</dbReference>
<dbReference type="FunCoup" id="Q9ER71">
    <property type="interactions" value="739"/>
</dbReference>
<dbReference type="STRING" id="10090.ENSMUSP00000059498"/>
<dbReference type="GlyGen" id="Q9ER71">
    <property type="glycosylation" value="2 sites"/>
</dbReference>
<dbReference type="iPTMnet" id="Q9ER71"/>
<dbReference type="PhosphoSitePlus" id="Q9ER71"/>
<dbReference type="jPOST" id="Q9ER71"/>
<dbReference type="PaxDb" id="10090-ENSMUSP00000059498"/>
<dbReference type="ProteomicsDB" id="253234">
    <molecule id="Q9ER71-1"/>
</dbReference>
<dbReference type="ProteomicsDB" id="253235">
    <molecule id="Q9ER71-2"/>
</dbReference>
<dbReference type="Pumba" id="Q9ER71"/>
<dbReference type="Antibodypedia" id="160">
    <property type="antibodies" value="353 antibodies from 25 providers"/>
</dbReference>
<dbReference type="DNASU" id="80837"/>
<dbReference type="Ensembl" id="ENSMUST00000055390.6">
    <molecule id="Q9ER71-1"/>
    <property type="protein sequence ID" value="ENSMUSP00000059498.6"/>
    <property type="gene ID" value="ENSMUSG00000046768.14"/>
</dbReference>
<dbReference type="GeneID" id="80837"/>
<dbReference type="KEGG" id="mmu:80837"/>
<dbReference type="UCSC" id="uc007nxc.1">
    <molecule id="Q9ER71-1"/>
    <property type="organism name" value="mouse"/>
</dbReference>
<dbReference type="AGR" id="MGI:1931551"/>
<dbReference type="CTD" id="57381"/>
<dbReference type="MGI" id="MGI:1931551">
    <property type="gene designation" value="Rhoj"/>
</dbReference>
<dbReference type="VEuPathDB" id="HostDB:ENSMUSG00000046768"/>
<dbReference type="eggNOG" id="KOG0393">
    <property type="taxonomic scope" value="Eukaryota"/>
</dbReference>
<dbReference type="GeneTree" id="ENSGT00940000159098"/>
<dbReference type="HOGENOM" id="CLU_041217_21_3_1"/>
<dbReference type="InParanoid" id="Q9ER71"/>
<dbReference type="OMA" id="ARMNCKE"/>
<dbReference type="OrthoDB" id="8830751at2759"/>
<dbReference type="PhylomeDB" id="Q9ER71"/>
<dbReference type="TreeFam" id="TF101109"/>
<dbReference type="Reactome" id="R-MMU-9013409">
    <property type="pathway name" value="RHOJ GTPase cycle"/>
</dbReference>
<dbReference type="BioGRID-ORCS" id="80837">
    <property type="hits" value="0 hits in 77 CRISPR screens"/>
</dbReference>
<dbReference type="ChiTaRS" id="Rhoj">
    <property type="organism name" value="mouse"/>
</dbReference>
<dbReference type="PRO" id="PR:Q9ER71"/>
<dbReference type="Proteomes" id="UP000000589">
    <property type="component" value="Chromosome 12"/>
</dbReference>
<dbReference type="RNAct" id="Q9ER71">
    <property type="molecule type" value="protein"/>
</dbReference>
<dbReference type="Bgee" id="ENSMUSG00000046768">
    <property type="expression patterns" value="Expressed in semi-lunar valve and 217 other cell types or tissues"/>
</dbReference>
<dbReference type="ExpressionAtlas" id="Q9ER71">
    <property type="expression patterns" value="baseline and differential"/>
</dbReference>
<dbReference type="GO" id="GO:0005886">
    <property type="term" value="C:plasma membrane"/>
    <property type="evidence" value="ECO:0000250"/>
    <property type="project" value="UniProtKB"/>
</dbReference>
<dbReference type="GO" id="GO:0005525">
    <property type="term" value="F:GTP binding"/>
    <property type="evidence" value="ECO:0000250"/>
    <property type="project" value="UniProtKB"/>
</dbReference>
<dbReference type="GO" id="GO:0003924">
    <property type="term" value="F:GTPase activity"/>
    <property type="evidence" value="ECO:0000250"/>
    <property type="project" value="UniProtKB"/>
</dbReference>
<dbReference type="GO" id="GO:0030036">
    <property type="term" value="P:actin cytoskeleton organization"/>
    <property type="evidence" value="ECO:0000314"/>
    <property type="project" value="UniProtKB"/>
</dbReference>
<dbReference type="GO" id="GO:0001525">
    <property type="term" value="P:angiogenesis"/>
    <property type="evidence" value="ECO:0007669"/>
    <property type="project" value="UniProtKB-KW"/>
</dbReference>
<dbReference type="GO" id="GO:0090050">
    <property type="term" value="P:positive regulation of cell migration involved in sprouting angiogenesis"/>
    <property type="evidence" value="ECO:0007669"/>
    <property type="project" value="Ensembl"/>
</dbReference>
<dbReference type="GO" id="GO:0008360">
    <property type="term" value="P:regulation of cell shape"/>
    <property type="evidence" value="ECO:0000314"/>
    <property type="project" value="MGI"/>
</dbReference>
<dbReference type="GO" id="GO:0010594">
    <property type="term" value="P:regulation of endothelial cell migration"/>
    <property type="evidence" value="ECO:0000250"/>
    <property type="project" value="UniProtKB"/>
</dbReference>
<dbReference type="GO" id="GO:1903670">
    <property type="term" value="P:regulation of sprouting angiogenesis"/>
    <property type="evidence" value="ECO:0000250"/>
    <property type="project" value="UniProtKB"/>
</dbReference>
<dbReference type="GO" id="GO:0061299">
    <property type="term" value="P:retina vasculature morphogenesis in camera-type eye"/>
    <property type="evidence" value="ECO:0000315"/>
    <property type="project" value="MGI"/>
</dbReference>
<dbReference type="GO" id="GO:0007266">
    <property type="term" value="P:Rho protein signal transduction"/>
    <property type="evidence" value="ECO:0000314"/>
    <property type="project" value="MGI"/>
</dbReference>
<dbReference type="FunFam" id="3.40.50.300:FF:000438">
    <property type="entry name" value="Rho-related GTP-binding protein RhoJ"/>
    <property type="match status" value="1"/>
</dbReference>
<dbReference type="Gene3D" id="3.40.50.300">
    <property type="entry name" value="P-loop containing nucleotide triphosphate hydrolases"/>
    <property type="match status" value="1"/>
</dbReference>
<dbReference type="InterPro" id="IPR027417">
    <property type="entry name" value="P-loop_NTPase"/>
</dbReference>
<dbReference type="InterPro" id="IPR005225">
    <property type="entry name" value="Small_GTP-bd"/>
</dbReference>
<dbReference type="InterPro" id="IPR001806">
    <property type="entry name" value="Small_GTPase"/>
</dbReference>
<dbReference type="InterPro" id="IPR003578">
    <property type="entry name" value="Small_GTPase_Rho"/>
</dbReference>
<dbReference type="NCBIfam" id="TIGR00231">
    <property type="entry name" value="small_GTP"/>
    <property type="match status" value="1"/>
</dbReference>
<dbReference type="PANTHER" id="PTHR24072">
    <property type="entry name" value="RHO FAMILY GTPASE"/>
    <property type="match status" value="1"/>
</dbReference>
<dbReference type="Pfam" id="PF00071">
    <property type="entry name" value="Ras"/>
    <property type="match status" value="1"/>
</dbReference>
<dbReference type="PRINTS" id="PR00449">
    <property type="entry name" value="RASTRNSFRMNG"/>
</dbReference>
<dbReference type="SMART" id="SM00175">
    <property type="entry name" value="RAB"/>
    <property type="match status" value="1"/>
</dbReference>
<dbReference type="SMART" id="SM00173">
    <property type="entry name" value="RAS"/>
    <property type="match status" value="1"/>
</dbReference>
<dbReference type="SMART" id="SM00174">
    <property type="entry name" value="RHO"/>
    <property type="match status" value="1"/>
</dbReference>
<dbReference type="SUPFAM" id="SSF52540">
    <property type="entry name" value="P-loop containing nucleoside triphosphate hydrolases"/>
    <property type="match status" value="1"/>
</dbReference>
<dbReference type="PROSITE" id="PS51420">
    <property type="entry name" value="RHO"/>
    <property type="match status" value="1"/>
</dbReference>
<keyword id="KW-0025">Alternative splicing</keyword>
<keyword id="KW-0037">Angiogenesis</keyword>
<keyword id="KW-1003">Cell membrane</keyword>
<keyword id="KW-0342">GTP-binding</keyword>
<keyword id="KW-0449">Lipoprotein</keyword>
<keyword id="KW-0472">Membrane</keyword>
<keyword id="KW-0488">Methylation</keyword>
<keyword id="KW-0547">Nucleotide-binding</keyword>
<keyword id="KW-0564">Palmitate</keyword>
<keyword id="KW-0636">Prenylation</keyword>
<keyword id="KW-1185">Reference proteome</keyword>